<feature type="chain" id="PRO_0000363887" description="Magnesium transporter MgtE">
    <location>
        <begin position="1"/>
        <end position="451"/>
    </location>
</feature>
<feature type="topological domain" description="Cytoplasmic" evidence="7">
    <location>
        <begin position="1"/>
        <end position="285"/>
    </location>
</feature>
<feature type="transmembrane region" description="Helical" evidence="2">
    <location>
        <begin position="286"/>
        <end position="306"/>
    </location>
</feature>
<feature type="topological domain" description="Extracellular" evidence="7">
    <location>
        <begin position="307"/>
        <end position="311"/>
    </location>
</feature>
<feature type="transmembrane region" description="Helical" evidence="2">
    <location>
        <begin position="312"/>
        <end position="332"/>
    </location>
</feature>
<feature type="topological domain" description="Cytoplasmic" evidence="7">
    <location>
        <begin position="333"/>
        <end position="371"/>
    </location>
</feature>
<feature type="transmembrane region" description="Helical" evidence="2">
    <location>
        <begin position="372"/>
        <end position="392"/>
    </location>
</feature>
<feature type="transmembrane region" description="Helical" evidence="2">
    <location>
        <begin position="393"/>
        <end position="413"/>
    </location>
</feature>
<feature type="topological domain" description="Cytoplasmic" evidence="7">
    <location>
        <begin position="414"/>
        <end position="427"/>
    </location>
</feature>
<feature type="transmembrane region" description="Helical" evidence="2">
    <location>
        <begin position="428"/>
        <end position="448"/>
    </location>
</feature>
<feature type="topological domain" description="Extracellular" evidence="7">
    <location>
        <begin position="449"/>
        <end position="451"/>
    </location>
</feature>
<feature type="domain" description="CBS 1" evidence="3">
    <location>
        <begin position="140"/>
        <end position="203"/>
    </location>
</feature>
<feature type="domain" description="CBS 2" evidence="3">
    <location>
        <begin position="204"/>
        <end position="260"/>
    </location>
</feature>
<feature type="binding site" evidence="1">
    <location>
        <position position="64"/>
    </location>
    <ligand>
        <name>Mg(2+)</name>
        <dbReference type="ChEBI" id="CHEBI:18420"/>
        <label>1</label>
    </ligand>
</feature>
<feature type="binding site" evidence="1">
    <location>
        <position position="96"/>
    </location>
    <ligand>
        <name>Mg(2+)</name>
        <dbReference type="ChEBI" id="CHEBI:18420"/>
        <label>2</label>
    </ligand>
</feature>
<feature type="binding site" evidence="1">
    <location>
        <position position="218"/>
    </location>
    <ligand>
        <name>Mg(2+)</name>
        <dbReference type="ChEBI" id="CHEBI:18420"/>
        <label>3</label>
    </ligand>
</feature>
<feature type="binding site" evidence="1">
    <location>
        <position position="228"/>
    </location>
    <ligand>
        <name>Mg(2+)</name>
        <dbReference type="ChEBI" id="CHEBI:18420"/>
        <label>1</label>
    </ligand>
</feature>
<feature type="binding site" evidence="1">
    <location>
        <position position="228"/>
    </location>
    <ligand>
        <name>Mg(2+)</name>
        <dbReference type="ChEBI" id="CHEBI:18420"/>
        <label>4</label>
    </ligand>
</feature>
<feature type="binding site" evidence="1">
    <location>
        <position position="249"/>
    </location>
    <ligand>
        <name>Mg(2+)</name>
        <dbReference type="ChEBI" id="CHEBI:18420"/>
        <label>2</label>
    </ligand>
</feature>
<feature type="binding site" evidence="1">
    <location>
        <position position="252"/>
    </location>
    <ligand>
        <name>Mg(2+)</name>
        <dbReference type="ChEBI" id="CHEBI:18420"/>
        <label>4</label>
    </ligand>
</feature>
<feature type="binding site" evidence="1">
    <location>
        <position position="257"/>
    </location>
    <ligand>
        <name>Mg(2+)</name>
        <dbReference type="ChEBI" id="CHEBI:18420"/>
        <label>3</label>
    </ligand>
</feature>
<feature type="binding site" evidence="1">
    <location>
        <position position="260"/>
    </location>
    <ligand>
        <name>Mg(2+)</name>
        <dbReference type="ChEBI" id="CHEBI:18420"/>
        <label>5</label>
    </ligand>
</feature>
<feature type="binding site" evidence="1">
    <location>
        <position position="261"/>
    </location>
    <ligand>
        <name>Mg(2+)</name>
        <dbReference type="ChEBI" id="CHEBI:18420"/>
        <label>5</label>
    </ligand>
</feature>
<feature type="binding site" evidence="1">
    <location>
        <position position="419"/>
    </location>
    <ligand>
        <name>Mg(2+)</name>
        <dbReference type="ChEBI" id="CHEBI:18420"/>
        <label>5</label>
    </ligand>
</feature>
<feature type="binding site" evidence="1">
    <location>
        <position position="433"/>
    </location>
    <ligand>
        <name>Mg(2+)</name>
        <dbReference type="ChEBI" id="CHEBI:18420"/>
        <label>6</label>
    </ligand>
</feature>
<proteinExistence type="evidence at protein level"/>
<name>MGTE_BACSU</name>
<keyword id="KW-0129">CBS domain</keyword>
<keyword id="KW-1003">Cell membrane</keyword>
<keyword id="KW-0460">Magnesium</keyword>
<keyword id="KW-0472">Membrane</keyword>
<keyword id="KW-0479">Metal-binding</keyword>
<keyword id="KW-1185">Reference proteome</keyword>
<keyword id="KW-0677">Repeat</keyword>
<keyword id="KW-0812">Transmembrane</keyword>
<keyword id="KW-1133">Transmembrane helix</keyword>
<keyword id="KW-0813">Transport</keyword>
<accession>O34442</accession>
<accession>Q796L4</accession>
<protein>
    <recommendedName>
        <fullName evidence="7">Magnesium transporter MgtE</fullName>
    </recommendedName>
</protein>
<comment type="function">
    <text evidence="4">Acts as a magnesium transporter (PubMed:24415722). MgtE is the dominant transporter under rich-medium growth conditions, and it may provide the primary route of magnesium import in B.subtilis, while the other putative transport proteins are likely to be utilized for more-specialized growth conditions (PubMed:24415722).</text>
</comment>
<comment type="catalytic activity">
    <reaction evidence="1">
        <text>Mg(2+)(in) = Mg(2+)(out)</text>
        <dbReference type="Rhea" id="RHEA:29827"/>
        <dbReference type="ChEBI" id="CHEBI:18420"/>
    </reaction>
</comment>
<comment type="activity regulation">
    <text evidence="5">Binds cyclic di-AMP (c-di-AMP), which may regulate the transporter activity.</text>
</comment>
<comment type="subunit">
    <text evidence="1">Homodimer.</text>
</comment>
<comment type="subcellular location">
    <subcellularLocation>
        <location evidence="7">Cell membrane</location>
        <topology evidence="2">Multi-pass membrane protein</topology>
    </subcellularLocation>
</comment>
<comment type="disruption phenotype">
    <text evidence="4">Deletion of the gene results in a significant growth defect under rich-medium growth conditions and in strong dependency on supplemental extracellular magnesium.</text>
</comment>
<comment type="similarity">
    <text evidence="7">Belongs to the SLC41A transporter family.</text>
</comment>
<sequence>MVQNMTYDELILRIIILLRDGKIRDFRSVIDELQPYDMAFIFKEMPEKHRARYLSYLTVDDITDMIGELEREFQLVVLNKVGKTKATLAMNKMDNDDLAQLLEEMDEELKEQLLSSMEASESKAVQLLMNYPADSAGRMMTNRYVWIPQHYTVKDAVVKLKSFAEIAESINYLYVINESKQLVGVLSYRDLILGEPEEKVQDLMFTRVISADALQDQEEVARLIERYDFLAIPVVEENNVLVGIVTVDDIIDVVIREADEDYEKFAASGKDITFDTKAYVAAYRRLPWLILLLFIGLISGSIISYFEDALKQVVALAFFMPMVSGMTGNTGTQSLAVVIRGLSKEEMNKKTIVRLIFREFRTSIFIGAVCSVLIAIVSIIWQGNALLGFVVASSLFLTLIIGTMSGTIIPIILHKLKVDPAIASGPLITTLNDILSLLIYFGIATAFIHSL</sequence>
<evidence type="ECO:0000250" key="1">
    <source>
        <dbReference type="UniProtKB" id="Q5SMG8"/>
    </source>
</evidence>
<evidence type="ECO:0000255" key="2"/>
<evidence type="ECO:0000255" key="3">
    <source>
        <dbReference type="PROSITE-ProRule" id="PRU00703"/>
    </source>
</evidence>
<evidence type="ECO:0000269" key="4">
    <source>
    </source>
</evidence>
<evidence type="ECO:0000269" key="5">
    <source>
    </source>
</evidence>
<evidence type="ECO:0000303" key="6">
    <source>
    </source>
</evidence>
<evidence type="ECO:0000305" key="7"/>
<gene>
    <name evidence="6" type="primary">mgtE</name>
    <name type="synonym">ykoK</name>
    <name type="ordered locus">BSU13300</name>
</gene>
<organism>
    <name type="scientific">Bacillus subtilis (strain 168)</name>
    <dbReference type="NCBI Taxonomy" id="224308"/>
    <lineage>
        <taxon>Bacteria</taxon>
        <taxon>Bacillati</taxon>
        <taxon>Bacillota</taxon>
        <taxon>Bacilli</taxon>
        <taxon>Bacillales</taxon>
        <taxon>Bacillaceae</taxon>
        <taxon>Bacillus</taxon>
    </lineage>
</organism>
<reference key="1">
    <citation type="submission" date="1997-11" db="EMBL/GenBank/DDBJ databases">
        <title>Sequence of the Bacillus subtilis genome between xlyA and ykoR.</title>
        <authorList>
            <person name="Devine K.M."/>
        </authorList>
    </citation>
    <scope>NUCLEOTIDE SEQUENCE [GENOMIC DNA]</scope>
    <source>
        <strain>168</strain>
    </source>
</reference>
<reference key="2">
    <citation type="journal article" date="1997" name="Nature">
        <title>The complete genome sequence of the Gram-positive bacterium Bacillus subtilis.</title>
        <authorList>
            <person name="Kunst F."/>
            <person name="Ogasawara N."/>
            <person name="Moszer I."/>
            <person name="Albertini A.M."/>
            <person name="Alloni G."/>
            <person name="Azevedo V."/>
            <person name="Bertero M.G."/>
            <person name="Bessieres P."/>
            <person name="Bolotin A."/>
            <person name="Borchert S."/>
            <person name="Borriss R."/>
            <person name="Boursier L."/>
            <person name="Brans A."/>
            <person name="Braun M."/>
            <person name="Brignell S.C."/>
            <person name="Bron S."/>
            <person name="Brouillet S."/>
            <person name="Bruschi C.V."/>
            <person name="Caldwell B."/>
            <person name="Capuano V."/>
            <person name="Carter N.M."/>
            <person name="Choi S.-K."/>
            <person name="Codani J.-J."/>
            <person name="Connerton I.F."/>
            <person name="Cummings N.J."/>
            <person name="Daniel R.A."/>
            <person name="Denizot F."/>
            <person name="Devine K.M."/>
            <person name="Duesterhoeft A."/>
            <person name="Ehrlich S.D."/>
            <person name="Emmerson P.T."/>
            <person name="Entian K.-D."/>
            <person name="Errington J."/>
            <person name="Fabret C."/>
            <person name="Ferrari E."/>
            <person name="Foulger D."/>
            <person name="Fritz C."/>
            <person name="Fujita M."/>
            <person name="Fujita Y."/>
            <person name="Fuma S."/>
            <person name="Galizzi A."/>
            <person name="Galleron N."/>
            <person name="Ghim S.-Y."/>
            <person name="Glaser P."/>
            <person name="Goffeau A."/>
            <person name="Golightly E.J."/>
            <person name="Grandi G."/>
            <person name="Guiseppi G."/>
            <person name="Guy B.J."/>
            <person name="Haga K."/>
            <person name="Haiech J."/>
            <person name="Harwood C.R."/>
            <person name="Henaut A."/>
            <person name="Hilbert H."/>
            <person name="Holsappel S."/>
            <person name="Hosono S."/>
            <person name="Hullo M.-F."/>
            <person name="Itaya M."/>
            <person name="Jones L.-M."/>
            <person name="Joris B."/>
            <person name="Karamata D."/>
            <person name="Kasahara Y."/>
            <person name="Klaerr-Blanchard M."/>
            <person name="Klein C."/>
            <person name="Kobayashi Y."/>
            <person name="Koetter P."/>
            <person name="Koningstein G."/>
            <person name="Krogh S."/>
            <person name="Kumano M."/>
            <person name="Kurita K."/>
            <person name="Lapidus A."/>
            <person name="Lardinois S."/>
            <person name="Lauber J."/>
            <person name="Lazarevic V."/>
            <person name="Lee S.-M."/>
            <person name="Levine A."/>
            <person name="Liu H."/>
            <person name="Masuda S."/>
            <person name="Mauel C."/>
            <person name="Medigue C."/>
            <person name="Medina N."/>
            <person name="Mellado R.P."/>
            <person name="Mizuno M."/>
            <person name="Moestl D."/>
            <person name="Nakai S."/>
            <person name="Noback M."/>
            <person name="Noone D."/>
            <person name="O'Reilly M."/>
            <person name="Ogawa K."/>
            <person name="Ogiwara A."/>
            <person name="Oudega B."/>
            <person name="Park S.-H."/>
            <person name="Parro V."/>
            <person name="Pohl T.M."/>
            <person name="Portetelle D."/>
            <person name="Porwollik S."/>
            <person name="Prescott A.M."/>
            <person name="Presecan E."/>
            <person name="Pujic P."/>
            <person name="Purnelle B."/>
            <person name="Rapoport G."/>
            <person name="Rey M."/>
            <person name="Reynolds S."/>
            <person name="Rieger M."/>
            <person name="Rivolta C."/>
            <person name="Rocha E."/>
            <person name="Roche B."/>
            <person name="Rose M."/>
            <person name="Sadaie Y."/>
            <person name="Sato T."/>
            <person name="Scanlan E."/>
            <person name="Schleich S."/>
            <person name="Schroeter R."/>
            <person name="Scoffone F."/>
            <person name="Sekiguchi J."/>
            <person name="Sekowska A."/>
            <person name="Seror S.J."/>
            <person name="Serror P."/>
            <person name="Shin B.-S."/>
            <person name="Soldo B."/>
            <person name="Sorokin A."/>
            <person name="Tacconi E."/>
            <person name="Takagi T."/>
            <person name="Takahashi H."/>
            <person name="Takemaru K."/>
            <person name="Takeuchi M."/>
            <person name="Tamakoshi A."/>
            <person name="Tanaka T."/>
            <person name="Terpstra P."/>
            <person name="Tognoni A."/>
            <person name="Tosato V."/>
            <person name="Uchiyama S."/>
            <person name="Vandenbol M."/>
            <person name="Vannier F."/>
            <person name="Vassarotti A."/>
            <person name="Viari A."/>
            <person name="Wambutt R."/>
            <person name="Wedler E."/>
            <person name="Wedler H."/>
            <person name="Weitzenegger T."/>
            <person name="Winters P."/>
            <person name="Wipat A."/>
            <person name="Yamamoto H."/>
            <person name="Yamane K."/>
            <person name="Yasumoto K."/>
            <person name="Yata K."/>
            <person name="Yoshida K."/>
            <person name="Yoshikawa H.-F."/>
            <person name="Zumstein E."/>
            <person name="Yoshikawa H."/>
            <person name="Danchin A."/>
        </authorList>
    </citation>
    <scope>NUCLEOTIDE SEQUENCE [LARGE SCALE GENOMIC DNA]</scope>
    <source>
        <strain>168</strain>
    </source>
</reference>
<reference key="3">
    <citation type="journal article" date="2014" name="J. Bacteriol.">
        <title>Assessment of the requirements for magnesium transporters in Bacillus subtilis.</title>
        <authorList>
            <person name="Wakeman C.A."/>
            <person name="Goodson J.R."/>
            <person name="Zacharia V.M."/>
            <person name="Winkler W.C."/>
        </authorList>
    </citation>
    <scope>FUNCTION AS A TRANSPORTER</scope>
    <scope>DISRUPTION PHENOTYPE</scope>
</reference>
<reference key="4">
    <citation type="journal article" date="2019" name="J. Biol. Chem.">
        <title>Sustained sensing in potassium homeostasis: Cyclic di-AMP controls potassium uptake by KimA at the levels of expression and activity.</title>
        <authorList>
            <person name="Gundlach J."/>
            <person name="Krueger L."/>
            <person name="Herzberg C."/>
            <person name="Turdiev A."/>
            <person name="Poehlein A."/>
            <person name="Tascon I."/>
            <person name="Weiss M."/>
            <person name="Hertel D."/>
            <person name="Daniel R."/>
            <person name="Haenelt I."/>
            <person name="Lee V.T."/>
            <person name="Stuelke J."/>
        </authorList>
    </citation>
    <scope>ACTIVITY REGULATION</scope>
    <source>
        <strain>168</strain>
    </source>
</reference>
<dbReference type="EMBL" id="AJ002571">
    <property type="protein sequence ID" value="CAA05608.1"/>
    <property type="molecule type" value="Genomic_DNA"/>
</dbReference>
<dbReference type="EMBL" id="AL009126">
    <property type="protein sequence ID" value="CAB13187.1"/>
    <property type="molecule type" value="Genomic_DNA"/>
</dbReference>
<dbReference type="PIR" id="G69859">
    <property type="entry name" value="G69859"/>
</dbReference>
<dbReference type="RefSeq" id="NP_389213.1">
    <property type="nucleotide sequence ID" value="NC_000964.3"/>
</dbReference>
<dbReference type="RefSeq" id="WP_003232543.1">
    <property type="nucleotide sequence ID" value="NZ_OZ025638.1"/>
</dbReference>
<dbReference type="SMR" id="O34442"/>
<dbReference type="FunCoup" id="O34442">
    <property type="interactions" value="211"/>
</dbReference>
<dbReference type="STRING" id="224308.BSU13300"/>
<dbReference type="TCDB" id="1.A.26.1.3">
    <property type="family name" value="the mg(2+) transporter-e (mgte) family"/>
</dbReference>
<dbReference type="PaxDb" id="224308-BSU13300"/>
<dbReference type="EnsemblBacteria" id="CAB13187">
    <property type="protein sequence ID" value="CAB13187"/>
    <property type="gene ID" value="BSU_13300"/>
</dbReference>
<dbReference type="GeneID" id="936439"/>
<dbReference type="KEGG" id="bsu:BSU13300"/>
<dbReference type="PATRIC" id="fig|224308.179.peg.1445"/>
<dbReference type="eggNOG" id="COG2239">
    <property type="taxonomic scope" value="Bacteria"/>
</dbReference>
<dbReference type="InParanoid" id="O34442"/>
<dbReference type="OrthoDB" id="9790355at2"/>
<dbReference type="PhylomeDB" id="O34442"/>
<dbReference type="BioCyc" id="BSUB:BSU13300-MONOMER"/>
<dbReference type="Proteomes" id="UP000001570">
    <property type="component" value="Chromosome"/>
</dbReference>
<dbReference type="GO" id="GO:0005886">
    <property type="term" value="C:plasma membrane"/>
    <property type="evidence" value="ECO:0007669"/>
    <property type="project" value="UniProtKB-SubCell"/>
</dbReference>
<dbReference type="GO" id="GO:0015095">
    <property type="term" value="F:magnesium ion transmembrane transporter activity"/>
    <property type="evidence" value="ECO:0007669"/>
    <property type="project" value="InterPro"/>
</dbReference>
<dbReference type="GO" id="GO:0046872">
    <property type="term" value="F:metal ion binding"/>
    <property type="evidence" value="ECO:0007669"/>
    <property type="project" value="UniProtKB-KW"/>
</dbReference>
<dbReference type="CDD" id="cd04606">
    <property type="entry name" value="CBS_pair_Mg_transporter"/>
    <property type="match status" value="1"/>
</dbReference>
<dbReference type="Gene3D" id="3.10.580.10">
    <property type="entry name" value="CBS-domain"/>
    <property type="match status" value="1"/>
</dbReference>
<dbReference type="Gene3D" id="1.25.60.10">
    <property type="entry name" value="MgtE N-terminal domain-like"/>
    <property type="match status" value="1"/>
</dbReference>
<dbReference type="Gene3D" id="1.10.357.20">
    <property type="entry name" value="SLC41 divalent cation transporters, integral membrane domain"/>
    <property type="match status" value="1"/>
</dbReference>
<dbReference type="InterPro" id="IPR000644">
    <property type="entry name" value="CBS_dom"/>
</dbReference>
<dbReference type="InterPro" id="IPR046342">
    <property type="entry name" value="CBS_dom_sf"/>
</dbReference>
<dbReference type="InterPro" id="IPR006668">
    <property type="entry name" value="Mg_transptr_MgtE_intracell_dom"/>
</dbReference>
<dbReference type="InterPro" id="IPR038076">
    <property type="entry name" value="MgtE_N_sf"/>
</dbReference>
<dbReference type="InterPro" id="IPR006669">
    <property type="entry name" value="MgtE_transporter"/>
</dbReference>
<dbReference type="InterPro" id="IPR006667">
    <property type="entry name" value="SLC41_membr_dom"/>
</dbReference>
<dbReference type="InterPro" id="IPR036739">
    <property type="entry name" value="SLC41_membr_dom_sf"/>
</dbReference>
<dbReference type="NCBIfam" id="TIGR00400">
    <property type="entry name" value="mgtE"/>
    <property type="match status" value="1"/>
</dbReference>
<dbReference type="PANTHER" id="PTHR43773">
    <property type="entry name" value="MAGNESIUM TRANSPORTER MGTE"/>
    <property type="match status" value="1"/>
</dbReference>
<dbReference type="PANTHER" id="PTHR43773:SF1">
    <property type="entry name" value="MAGNESIUM TRANSPORTER MGTE"/>
    <property type="match status" value="1"/>
</dbReference>
<dbReference type="Pfam" id="PF00571">
    <property type="entry name" value="CBS"/>
    <property type="match status" value="2"/>
</dbReference>
<dbReference type="Pfam" id="PF01769">
    <property type="entry name" value="MgtE"/>
    <property type="match status" value="1"/>
</dbReference>
<dbReference type="Pfam" id="PF03448">
    <property type="entry name" value="MgtE_N"/>
    <property type="match status" value="1"/>
</dbReference>
<dbReference type="SMART" id="SM00116">
    <property type="entry name" value="CBS"/>
    <property type="match status" value="2"/>
</dbReference>
<dbReference type="SMART" id="SM00924">
    <property type="entry name" value="MgtE_N"/>
    <property type="match status" value="1"/>
</dbReference>
<dbReference type="SUPFAM" id="SSF54631">
    <property type="entry name" value="CBS-domain pair"/>
    <property type="match status" value="1"/>
</dbReference>
<dbReference type="SUPFAM" id="SSF161093">
    <property type="entry name" value="MgtE membrane domain-like"/>
    <property type="match status" value="1"/>
</dbReference>
<dbReference type="SUPFAM" id="SSF158791">
    <property type="entry name" value="MgtE N-terminal domain-like"/>
    <property type="match status" value="1"/>
</dbReference>
<dbReference type="PROSITE" id="PS51371">
    <property type="entry name" value="CBS"/>
    <property type="match status" value="2"/>
</dbReference>